<reference key="1">
    <citation type="journal article" date="2007" name="Science">
        <title>Legumes symbioses: absence of nod genes in photosynthetic bradyrhizobia.</title>
        <authorList>
            <person name="Giraud E."/>
            <person name="Moulin L."/>
            <person name="Vallenet D."/>
            <person name="Barbe V."/>
            <person name="Cytryn E."/>
            <person name="Avarre J.-C."/>
            <person name="Jaubert M."/>
            <person name="Simon D."/>
            <person name="Cartieaux F."/>
            <person name="Prin Y."/>
            <person name="Bena G."/>
            <person name="Hannibal L."/>
            <person name="Fardoux J."/>
            <person name="Kojadinovic M."/>
            <person name="Vuillet L."/>
            <person name="Lajus A."/>
            <person name="Cruveiller S."/>
            <person name="Rouy Z."/>
            <person name="Mangenot S."/>
            <person name="Segurens B."/>
            <person name="Dossat C."/>
            <person name="Franck W.L."/>
            <person name="Chang W.-S."/>
            <person name="Saunders E."/>
            <person name="Bruce D."/>
            <person name="Richardson P."/>
            <person name="Normand P."/>
            <person name="Dreyfus B."/>
            <person name="Pignol D."/>
            <person name="Stacey G."/>
            <person name="Emerich D."/>
            <person name="Vermeglio A."/>
            <person name="Medigue C."/>
            <person name="Sadowsky M."/>
        </authorList>
    </citation>
    <scope>NUCLEOTIDE SEQUENCE [LARGE SCALE GENOMIC DNA]</scope>
    <source>
        <strain>BTAi1 / ATCC BAA-1182</strain>
    </source>
</reference>
<comment type="catalytic activity">
    <reaction evidence="1">
        <text>L-homoserine + ATP = O-phospho-L-homoserine + ADP + H(+)</text>
        <dbReference type="Rhea" id="RHEA:13985"/>
        <dbReference type="ChEBI" id="CHEBI:15378"/>
        <dbReference type="ChEBI" id="CHEBI:30616"/>
        <dbReference type="ChEBI" id="CHEBI:57476"/>
        <dbReference type="ChEBI" id="CHEBI:57590"/>
        <dbReference type="ChEBI" id="CHEBI:456216"/>
        <dbReference type="EC" id="2.7.1.39"/>
    </reaction>
</comment>
<comment type="pathway">
    <text evidence="1">Amino-acid biosynthesis; L-threonine biosynthesis; L-threonine from L-aspartate: step 4/5.</text>
</comment>
<comment type="similarity">
    <text evidence="1">Belongs to the pseudomonas-type ThrB family.</text>
</comment>
<proteinExistence type="inferred from homology"/>
<accession>A5EAL1</accession>
<evidence type="ECO:0000255" key="1">
    <source>
        <dbReference type="HAMAP-Rule" id="MF_00301"/>
    </source>
</evidence>
<sequence length="326" mass="35641">MAVYTDVAADELADFLKTYDIGELLSYKGIAEGVENSNFLLHTTKGYFILTLYEKRVAVDDLPYFLGLMAHLAERGVSCPQPARNRDGAVYSTLSGRPAAIINFLEGLWPRKPNVAHCAGVGTALARMHLAGRDFPLVRKNPLSVSGWMSLFAQAADRADTVQAGLSALLSAELDVLARSWPTDLPEGVIHADLFPDNVFFLGDQLSGLIDFPFSCNDILAYDVAICLNAWCFEADHSLNVTKARAFFHAYGRERPLSQAELAALPLLARGAAIRFLLTRLVDWLNVPAGALVKPKDPLEYVRKLRFHQAVTSVRDYGLDGSGATA</sequence>
<keyword id="KW-0028">Amino-acid biosynthesis</keyword>
<keyword id="KW-0067">ATP-binding</keyword>
<keyword id="KW-0418">Kinase</keyword>
<keyword id="KW-0547">Nucleotide-binding</keyword>
<keyword id="KW-1185">Reference proteome</keyword>
<keyword id="KW-0791">Threonine biosynthesis</keyword>
<keyword id="KW-0808">Transferase</keyword>
<gene>
    <name evidence="1" type="primary">thrB</name>
    <name type="ordered locus">BBta_0949</name>
</gene>
<protein>
    <recommendedName>
        <fullName evidence="1">Homoserine kinase</fullName>
        <shortName evidence="1">HK</shortName>
        <shortName evidence="1">HSK</shortName>
        <ecNumber evidence="1">2.7.1.39</ecNumber>
    </recommendedName>
</protein>
<feature type="chain" id="PRO_0000300780" description="Homoserine kinase">
    <location>
        <begin position="1"/>
        <end position="326"/>
    </location>
</feature>
<dbReference type="EC" id="2.7.1.39" evidence="1"/>
<dbReference type="EMBL" id="CP000494">
    <property type="protein sequence ID" value="ABQ33205.1"/>
    <property type="molecule type" value="Genomic_DNA"/>
</dbReference>
<dbReference type="RefSeq" id="WP_012041253.1">
    <property type="nucleotide sequence ID" value="NC_009485.1"/>
</dbReference>
<dbReference type="SMR" id="A5EAL1"/>
<dbReference type="STRING" id="288000.BBta_0949"/>
<dbReference type="KEGG" id="bbt:BBta_0949"/>
<dbReference type="eggNOG" id="COG2334">
    <property type="taxonomic scope" value="Bacteria"/>
</dbReference>
<dbReference type="HOGENOM" id="CLU_053300_1_0_5"/>
<dbReference type="OrthoDB" id="9777460at2"/>
<dbReference type="UniPathway" id="UPA00050">
    <property type="reaction ID" value="UER00064"/>
</dbReference>
<dbReference type="Proteomes" id="UP000000246">
    <property type="component" value="Chromosome"/>
</dbReference>
<dbReference type="GO" id="GO:0005524">
    <property type="term" value="F:ATP binding"/>
    <property type="evidence" value="ECO:0007669"/>
    <property type="project" value="UniProtKB-KW"/>
</dbReference>
<dbReference type="GO" id="GO:0004413">
    <property type="term" value="F:homoserine kinase activity"/>
    <property type="evidence" value="ECO:0007669"/>
    <property type="project" value="UniProtKB-UniRule"/>
</dbReference>
<dbReference type="GO" id="GO:0009088">
    <property type="term" value="P:threonine biosynthetic process"/>
    <property type="evidence" value="ECO:0007669"/>
    <property type="project" value="UniProtKB-UniRule"/>
</dbReference>
<dbReference type="CDD" id="cd05153">
    <property type="entry name" value="HomoserineK_II"/>
    <property type="match status" value="1"/>
</dbReference>
<dbReference type="FunFam" id="3.90.1200.10:FF:000041">
    <property type="entry name" value="Homoserine kinase"/>
    <property type="match status" value="1"/>
</dbReference>
<dbReference type="Gene3D" id="3.90.1200.10">
    <property type="match status" value="1"/>
</dbReference>
<dbReference type="Gene3D" id="3.30.200.20">
    <property type="entry name" value="Phosphorylase Kinase, domain 1"/>
    <property type="match status" value="1"/>
</dbReference>
<dbReference type="HAMAP" id="MF_00301">
    <property type="entry name" value="Homoser_kinase_2"/>
    <property type="match status" value="1"/>
</dbReference>
<dbReference type="InterPro" id="IPR002575">
    <property type="entry name" value="Aminoglycoside_PTrfase"/>
</dbReference>
<dbReference type="InterPro" id="IPR005280">
    <property type="entry name" value="Homoserine_kinase_II"/>
</dbReference>
<dbReference type="InterPro" id="IPR011009">
    <property type="entry name" value="Kinase-like_dom_sf"/>
</dbReference>
<dbReference type="InterPro" id="IPR050249">
    <property type="entry name" value="Pseudomonas-type_ThrB"/>
</dbReference>
<dbReference type="NCBIfam" id="NF003558">
    <property type="entry name" value="PRK05231.1"/>
    <property type="match status" value="1"/>
</dbReference>
<dbReference type="NCBIfam" id="TIGR00938">
    <property type="entry name" value="thrB_alt"/>
    <property type="match status" value="1"/>
</dbReference>
<dbReference type="PANTHER" id="PTHR21064:SF6">
    <property type="entry name" value="AMINOGLYCOSIDE PHOSPHOTRANSFERASE DOMAIN-CONTAINING PROTEIN"/>
    <property type="match status" value="1"/>
</dbReference>
<dbReference type="PANTHER" id="PTHR21064">
    <property type="entry name" value="AMINOGLYCOSIDE PHOSPHOTRANSFERASE DOMAIN-CONTAINING PROTEIN-RELATED"/>
    <property type="match status" value="1"/>
</dbReference>
<dbReference type="Pfam" id="PF01636">
    <property type="entry name" value="APH"/>
    <property type="match status" value="1"/>
</dbReference>
<dbReference type="SUPFAM" id="SSF56112">
    <property type="entry name" value="Protein kinase-like (PK-like)"/>
    <property type="match status" value="1"/>
</dbReference>
<organism>
    <name type="scientific">Bradyrhizobium sp. (strain BTAi1 / ATCC BAA-1182)</name>
    <dbReference type="NCBI Taxonomy" id="288000"/>
    <lineage>
        <taxon>Bacteria</taxon>
        <taxon>Pseudomonadati</taxon>
        <taxon>Pseudomonadota</taxon>
        <taxon>Alphaproteobacteria</taxon>
        <taxon>Hyphomicrobiales</taxon>
        <taxon>Nitrobacteraceae</taxon>
        <taxon>Bradyrhizobium</taxon>
    </lineage>
</organism>
<name>KHSE_BRASB</name>